<comment type="function">
    <text evidence="1">Catalyzes the decarboxylation of orotidine 5'-monophosphate (OMP) to uridine 5'-monophosphate (UMP).</text>
</comment>
<comment type="catalytic activity">
    <reaction evidence="1">
        <text>orotidine 5'-phosphate + H(+) = UMP + CO2</text>
        <dbReference type="Rhea" id="RHEA:11596"/>
        <dbReference type="ChEBI" id="CHEBI:15378"/>
        <dbReference type="ChEBI" id="CHEBI:16526"/>
        <dbReference type="ChEBI" id="CHEBI:57538"/>
        <dbReference type="ChEBI" id="CHEBI:57865"/>
        <dbReference type="EC" id="4.1.1.23"/>
    </reaction>
</comment>
<comment type="pathway">
    <text evidence="1">Pyrimidine metabolism; UMP biosynthesis via de novo pathway; UMP from orotate: step 2/2.</text>
</comment>
<comment type="subunit">
    <text evidence="1">Homodimer.</text>
</comment>
<comment type="similarity">
    <text evidence="1">Belongs to the OMP decarboxylase family. Type 1 subfamily.</text>
</comment>
<protein>
    <recommendedName>
        <fullName evidence="1">Orotidine 5'-phosphate decarboxylase</fullName>
        <ecNumber evidence="1">4.1.1.23</ecNumber>
    </recommendedName>
    <alternativeName>
        <fullName evidence="1">OMP decarboxylase</fullName>
        <shortName evidence="1">OMPDCase</shortName>
        <shortName evidence="1">OMPdecase</shortName>
    </alternativeName>
</protein>
<gene>
    <name evidence="1" type="primary">pyrF</name>
    <name type="ordered locus">RL0331</name>
</gene>
<organism>
    <name type="scientific">Rhizobium johnstonii (strain DSM 114642 / LMG 32736 / 3841)</name>
    <name type="common">Rhizobium leguminosarum bv. viciae</name>
    <dbReference type="NCBI Taxonomy" id="216596"/>
    <lineage>
        <taxon>Bacteria</taxon>
        <taxon>Pseudomonadati</taxon>
        <taxon>Pseudomonadota</taxon>
        <taxon>Alphaproteobacteria</taxon>
        <taxon>Hyphomicrobiales</taxon>
        <taxon>Rhizobiaceae</taxon>
        <taxon>Rhizobium/Agrobacterium group</taxon>
        <taxon>Rhizobium</taxon>
        <taxon>Rhizobium johnstonii</taxon>
    </lineage>
</organism>
<sequence>MGARERLIVGLDVPTIGEAERLVSTLGDDILFYKIGYQLVFAGGLEFARDLAASGKKIFLDMKLLDIDNTVASGVENIAKMGMSMLTLHAYPKAMKAAVEAAAGSGLCLLGVTVLTSMDADDLAEAGYSQDPHSLVLRRAGQARAAGMGGIVCSAEEAAAVREIVGPDMAIVTPGIRPDGSDKGDQKRVMTPFDALKAGATHLVVGRPIVKAPDPRDAARAILSEMVSALWPANR</sequence>
<keyword id="KW-0210">Decarboxylase</keyword>
<keyword id="KW-0456">Lyase</keyword>
<keyword id="KW-0665">Pyrimidine biosynthesis</keyword>
<feature type="chain" id="PRO_1000065937" description="Orotidine 5'-phosphate decarboxylase">
    <location>
        <begin position="1"/>
        <end position="235"/>
    </location>
</feature>
<feature type="active site" description="Proton donor" evidence="1">
    <location>
        <position position="63"/>
    </location>
</feature>
<feature type="binding site" evidence="1">
    <location>
        <position position="12"/>
    </location>
    <ligand>
        <name>substrate</name>
    </ligand>
</feature>
<feature type="binding site" evidence="1">
    <location>
        <position position="34"/>
    </location>
    <ligand>
        <name>substrate</name>
    </ligand>
</feature>
<feature type="binding site" evidence="1">
    <location>
        <begin position="61"/>
        <end position="70"/>
    </location>
    <ligand>
        <name>substrate</name>
    </ligand>
</feature>
<feature type="binding site" evidence="1">
    <location>
        <position position="116"/>
    </location>
    <ligand>
        <name>substrate</name>
    </ligand>
</feature>
<feature type="binding site" evidence="1">
    <location>
        <position position="177"/>
    </location>
    <ligand>
        <name>substrate</name>
    </ligand>
</feature>
<feature type="binding site" evidence="1">
    <location>
        <position position="186"/>
    </location>
    <ligand>
        <name>substrate</name>
    </ligand>
</feature>
<feature type="binding site" evidence="1">
    <location>
        <position position="206"/>
    </location>
    <ligand>
        <name>substrate</name>
    </ligand>
</feature>
<feature type="binding site" evidence="1">
    <location>
        <position position="207"/>
    </location>
    <ligand>
        <name>substrate</name>
    </ligand>
</feature>
<dbReference type="EC" id="4.1.1.23" evidence="1"/>
<dbReference type="EMBL" id="AM236080">
    <property type="protein sequence ID" value="CAK05821.1"/>
    <property type="molecule type" value="Genomic_DNA"/>
</dbReference>
<dbReference type="RefSeq" id="WP_011650134.1">
    <property type="nucleotide sequence ID" value="NC_008380.1"/>
</dbReference>
<dbReference type="SMR" id="Q1MMI1"/>
<dbReference type="EnsemblBacteria" id="CAK05821">
    <property type="protein sequence ID" value="CAK05821"/>
    <property type="gene ID" value="RL0331"/>
</dbReference>
<dbReference type="KEGG" id="rle:RL0331"/>
<dbReference type="eggNOG" id="COG0284">
    <property type="taxonomic scope" value="Bacteria"/>
</dbReference>
<dbReference type="HOGENOM" id="CLU_067069_1_0_5"/>
<dbReference type="UniPathway" id="UPA00070">
    <property type="reaction ID" value="UER00120"/>
</dbReference>
<dbReference type="Proteomes" id="UP000006575">
    <property type="component" value="Chromosome"/>
</dbReference>
<dbReference type="GO" id="GO:0005829">
    <property type="term" value="C:cytosol"/>
    <property type="evidence" value="ECO:0007669"/>
    <property type="project" value="TreeGrafter"/>
</dbReference>
<dbReference type="GO" id="GO:0004590">
    <property type="term" value="F:orotidine-5'-phosphate decarboxylase activity"/>
    <property type="evidence" value="ECO:0007669"/>
    <property type="project" value="UniProtKB-UniRule"/>
</dbReference>
<dbReference type="GO" id="GO:0006207">
    <property type="term" value="P:'de novo' pyrimidine nucleobase biosynthetic process"/>
    <property type="evidence" value="ECO:0007669"/>
    <property type="project" value="InterPro"/>
</dbReference>
<dbReference type="GO" id="GO:0044205">
    <property type="term" value="P:'de novo' UMP biosynthetic process"/>
    <property type="evidence" value="ECO:0007669"/>
    <property type="project" value="UniProtKB-UniRule"/>
</dbReference>
<dbReference type="CDD" id="cd04725">
    <property type="entry name" value="OMP_decarboxylase_like"/>
    <property type="match status" value="1"/>
</dbReference>
<dbReference type="Gene3D" id="3.20.20.70">
    <property type="entry name" value="Aldolase class I"/>
    <property type="match status" value="1"/>
</dbReference>
<dbReference type="HAMAP" id="MF_01200_B">
    <property type="entry name" value="OMPdecase_type1_B"/>
    <property type="match status" value="1"/>
</dbReference>
<dbReference type="InterPro" id="IPR013785">
    <property type="entry name" value="Aldolase_TIM"/>
</dbReference>
<dbReference type="InterPro" id="IPR014732">
    <property type="entry name" value="OMPdecase"/>
</dbReference>
<dbReference type="InterPro" id="IPR018089">
    <property type="entry name" value="OMPdecase_AS"/>
</dbReference>
<dbReference type="InterPro" id="IPR047596">
    <property type="entry name" value="OMPdecase_bac"/>
</dbReference>
<dbReference type="InterPro" id="IPR001754">
    <property type="entry name" value="OMPdeCOase_dom"/>
</dbReference>
<dbReference type="InterPro" id="IPR011060">
    <property type="entry name" value="RibuloseP-bd_barrel"/>
</dbReference>
<dbReference type="NCBIfam" id="NF001273">
    <property type="entry name" value="PRK00230.1"/>
    <property type="match status" value="1"/>
</dbReference>
<dbReference type="NCBIfam" id="TIGR01740">
    <property type="entry name" value="pyrF"/>
    <property type="match status" value="1"/>
</dbReference>
<dbReference type="PANTHER" id="PTHR32119">
    <property type="entry name" value="OROTIDINE 5'-PHOSPHATE DECARBOXYLASE"/>
    <property type="match status" value="1"/>
</dbReference>
<dbReference type="PANTHER" id="PTHR32119:SF2">
    <property type="entry name" value="OROTIDINE 5'-PHOSPHATE DECARBOXYLASE"/>
    <property type="match status" value="1"/>
</dbReference>
<dbReference type="Pfam" id="PF00215">
    <property type="entry name" value="OMPdecase"/>
    <property type="match status" value="1"/>
</dbReference>
<dbReference type="SMART" id="SM00934">
    <property type="entry name" value="OMPdecase"/>
    <property type="match status" value="1"/>
</dbReference>
<dbReference type="SUPFAM" id="SSF51366">
    <property type="entry name" value="Ribulose-phoshate binding barrel"/>
    <property type="match status" value="1"/>
</dbReference>
<dbReference type="PROSITE" id="PS00156">
    <property type="entry name" value="OMPDECASE"/>
    <property type="match status" value="1"/>
</dbReference>
<evidence type="ECO:0000255" key="1">
    <source>
        <dbReference type="HAMAP-Rule" id="MF_01200"/>
    </source>
</evidence>
<accession>Q1MMI1</accession>
<name>PYRF_RHIJ3</name>
<proteinExistence type="inferred from homology"/>
<reference key="1">
    <citation type="journal article" date="2006" name="Genome Biol.">
        <title>The genome of Rhizobium leguminosarum has recognizable core and accessory components.</title>
        <authorList>
            <person name="Young J.P.W."/>
            <person name="Crossman L.C."/>
            <person name="Johnston A.W.B."/>
            <person name="Thomson N.R."/>
            <person name="Ghazoui Z.F."/>
            <person name="Hull K.H."/>
            <person name="Wexler M."/>
            <person name="Curson A.R.J."/>
            <person name="Todd J.D."/>
            <person name="Poole P.S."/>
            <person name="Mauchline T.H."/>
            <person name="East A.K."/>
            <person name="Quail M.A."/>
            <person name="Churcher C."/>
            <person name="Arrowsmith C."/>
            <person name="Cherevach I."/>
            <person name="Chillingworth T."/>
            <person name="Clarke K."/>
            <person name="Cronin A."/>
            <person name="Davis P."/>
            <person name="Fraser A."/>
            <person name="Hance Z."/>
            <person name="Hauser H."/>
            <person name="Jagels K."/>
            <person name="Moule S."/>
            <person name="Mungall K."/>
            <person name="Norbertczak H."/>
            <person name="Rabbinowitsch E."/>
            <person name="Sanders M."/>
            <person name="Simmonds M."/>
            <person name="Whitehead S."/>
            <person name="Parkhill J."/>
        </authorList>
    </citation>
    <scope>NUCLEOTIDE SEQUENCE [LARGE SCALE GENOMIC DNA]</scope>
    <source>
        <strain>DSM 114642 / LMG 32736 / 3841</strain>
    </source>
</reference>